<proteinExistence type="inferred from homology"/>
<feature type="chain" id="PRO_0000297525" description="Rhamnulokinase">
    <location>
        <begin position="1"/>
        <end position="485"/>
    </location>
</feature>
<feature type="active site" description="Proton acceptor" evidence="1">
    <location>
        <position position="232"/>
    </location>
</feature>
<feature type="binding site" evidence="1">
    <location>
        <begin position="8"/>
        <end position="12"/>
    </location>
    <ligand>
        <name>ATP</name>
        <dbReference type="ChEBI" id="CHEBI:30616"/>
    </ligand>
</feature>
<feature type="binding site" evidence="1">
    <location>
        <position position="78"/>
    </location>
    <ligand>
        <name>substrate</name>
    </ligand>
</feature>
<feature type="binding site" evidence="1">
    <location>
        <begin position="231"/>
        <end position="233"/>
    </location>
    <ligand>
        <name>substrate</name>
    </ligand>
</feature>
<feature type="binding site" evidence="1">
    <location>
        <position position="254"/>
    </location>
    <ligand>
        <name>ATP</name>
        <dbReference type="ChEBI" id="CHEBI:30616"/>
    </ligand>
</feature>
<feature type="binding site" evidence="1">
    <location>
        <position position="291"/>
    </location>
    <ligand>
        <name>substrate</name>
    </ligand>
</feature>
<feature type="binding site" evidence="1">
    <location>
        <position position="299"/>
    </location>
    <ligand>
        <name>ATP</name>
        <dbReference type="ChEBI" id="CHEBI:30616"/>
    </ligand>
</feature>
<feature type="binding site" evidence="1">
    <location>
        <position position="397"/>
    </location>
    <ligand>
        <name>ATP</name>
        <dbReference type="ChEBI" id="CHEBI:30616"/>
    </ligand>
</feature>
<feature type="disulfide bond" evidence="1">
    <location>
        <begin position="348"/>
        <end position="365"/>
    </location>
</feature>
<feature type="disulfide bond" evidence="1">
    <location>
        <begin position="408"/>
        <end position="412"/>
    </location>
</feature>
<gene>
    <name evidence="1" type="primary">rhaB</name>
    <name type="ordered locus">YPDSF_3642</name>
</gene>
<evidence type="ECO:0000255" key="1">
    <source>
        <dbReference type="HAMAP-Rule" id="MF_01535"/>
    </source>
</evidence>
<evidence type="ECO:0000305" key="2"/>
<keyword id="KW-0067">ATP-binding</keyword>
<keyword id="KW-1015">Disulfide bond</keyword>
<keyword id="KW-0418">Kinase</keyword>
<keyword id="KW-0460">Magnesium</keyword>
<keyword id="KW-0547">Nucleotide-binding</keyword>
<keyword id="KW-0684">Rhamnose metabolism</keyword>
<keyword id="KW-0808">Transferase</keyword>
<accession>A4TRT0</accession>
<sequence length="485" mass="53424">MVAIDLGASSGRVMLASYYPGQQQLTLREVCRFTNQIKSIDGSDVWDIDAIEQSIREGLSQLDSEGIALDSIGIDSWGVDFVLLDKQGKRIGQPVSYRDSRTQGVMARAQQTLGSNAIYRRTGIQFLPFNTLYQLRALSEQQPHLLADVAHLLLIPDYLHYRLTGQLNWEYTNASTTQLLNIETGDWDSDLLAYAGVPAHWFAKPGKPGNTIGYWHSANGQQVPVVAVATHDTASAVLAAPLIDADAAYLSSGTWSLMGFESGTPLTHQQAQCSNITNEGGAEGRYRVLKNIMGLWLLQRATDELQIDDLPQLIEQAARQPACRSLINPNDSRFINPPNMCREIQNACREHQFPVPNTAAQLARCIFDSLAMLYRQVAQELATLRGRPISHLHIVGGGCQNQFLNQLCADACGLNVSMGPVEASTLGNIGSQLISLGEVADVTHYRRIVANNFPLHHLSPHDNSDFAAHWLQFQSLSQLPKELCI</sequence>
<dbReference type="EC" id="2.7.1.5" evidence="1"/>
<dbReference type="EMBL" id="CP000668">
    <property type="protein sequence ID" value="ABP41992.1"/>
    <property type="status" value="ALT_INIT"/>
    <property type="molecule type" value="Genomic_DNA"/>
</dbReference>
<dbReference type="RefSeq" id="WP_002209105.1">
    <property type="nucleotide sequence ID" value="NZ_CP009715.1"/>
</dbReference>
<dbReference type="SMR" id="A4TRT0"/>
<dbReference type="GeneID" id="57974275"/>
<dbReference type="KEGG" id="ypp:YPDSF_3642"/>
<dbReference type="UniPathway" id="UPA00541">
    <property type="reaction ID" value="UER00602"/>
</dbReference>
<dbReference type="GO" id="GO:0005829">
    <property type="term" value="C:cytosol"/>
    <property type="evidence" value="ECO:0007669"/>
    <property type="project" value="TreeGrafter"/>
</dbReference>
<dbReference type="GO" id="GO:0005524">
    <property type="term" value="F:ATP binding"/>
    <property type="evidence" value="ECO:0007669"/>
    <property type="project" value="UniProtKB-KW"/>
</dbReference>
<dbReference type="GO" id="GO:0004370">
    <property type="term" value="F:glycerol kinase activity"/>
    <property type="evidence" value="ECO:0007669"/>
    <property type="project" value="TreeGrafter"/>
</dbReference>
<dbReference type="GO" id="GO:0008993">
    <property type="term" value="F:rhamnulokinase activity"/>
    <property type="evidence" value="ECO:0007669"/>
    <property type="project" value="UniProtKB-UniRule"/>
</dbReference>
<dbReference type="GO" id="GO:0006071">
    <property type="term" value="P:glycerol metabolic process"/>
    <property type="evidence" value="ECO:0007669"/>
    <property type="project" value="TreeGrafter"/>
</dbReference>
<dbReference type="GO" id="GO:0019301">
    <property type="term" value="P:rhamnose catabolic process"/>
    <property type="evidence" value="ECO:0007669"/>
    <property type="project" value="UniProtKB-UniRule"/>
</dbReference>
<dbReference type="CDD" id="cd07771">
    <property type="entry name" value="ASKHA_NBD_FGGY_RhaB-like"/>
    <property type="match status" value="1"/>
</dbReference>
<dbReference type="FunFam" id="3.30.420.40:FF:000064">
    <property type="entry name" value="Rhamnulokinase"/>
    <property type="match status" value="1"/>
</dbReference>
<dbReference type="FunFam" id="3.30.420.40:FF:000073">
    <property type="entry name" value="Rhamnulokinase"/>
    <property type="match status" value="1"/>
</dbReference>
<dbReference type="Gene3D" id="3.30.420.40">
    <property type="match status" value="2"/>
</dbReference>
<dbReference type="HAMAP" id="MF_01535">
    <property type="entry name" value="Rhamnulokinase"/>
    <property type="match status" value="1"/>
</dbReference>
<dbReference type="InterPro" id="IPR043129">
    <property type="entry name" value="ATPase_NBD"/>
</dbReference>
<dbReference type="InterPro" id="IPR000577">
    <property type="entry name" value="Carb_kinase_FGGY"/>
</dbReference>
<dbReference type="InterPro" id="IPR018485">
    <property type="entry name" value="FGGY_C"/>
</dbReference>
<dbReference type="InterPro" id="IPR018484">
    <property type="entry name" value="FGGY_N"/>
</dbReference>
<dbReference type="InterPro" id="IPR013449">
    <property type="entry name" value="Rhamnulokinase"/>
</dbReference>
<dbReference type="NCBIfam" id="NF007925">
    <property type="entry name" value="PRK10640.1"/>
    <property type="match status" value="1"/>
</dbReference>
<dbReference type="NCBIfam" id="TIGR02627">
    <property type="entry name" value="rhamnulo_kin"/>
    <property type="match status" value="1"/>
</dbReference>
<dbReference type="PANTHER" id="PTHR10196:SF93">
    <property type="entry name" value="L-RHAMNULOKINASE"/>
    <property type="match status" value="1"/>
</dbReference>
<dbReference type="PANTHER" id="PTHR10196">
    <property type="entry name" value="SUGAR KINASE"/>
    <property type="match status" value="1"/>
</dbReference>
<dbReference type="Pfam" id="PF02782">
    <property type="entry name" value="FGGY_C"/>
    <property type="match status" value="1"/>
</dbReference>
<dbReference type="Pfam" id="PF00370">
    <property type="entry name" value="FGGY_N"/>
    <property type="match status" value="1"/>
</dbReference>
<dbReference type="PIRSF" id="PIRSF000538">
    <property type="entry name" value="GlpK"/>
    <property type="match status" value="1"/>
</dbReference>
<dbReference type="SUPFAM" id="SSF53067">
    <property type="entry name" value="Actin-like ATPase domain"/>
    <property type="match status" value="2"/>
</dbReference>
<organism>
    <name type="scientific">Yersinia pestis (strain Pestoides F)</name>
    <dbReference type="NCBI Taxonomy" id="386656"/>
    <lineage>
        <taxon>Bacteria</taxon>
        <taxon>Pseudomonadati</taxon>
        <taxon>Pseudomonadota</taxon>
        <taxon>Gammaproteobacteria</taxon>
        <taxon>Enterobacterales</taxon>
        <taxon>Yersiniaceae</taxon>
        <taxon>Yersinia</taxon>
    </lineage>
</organism>
<comment type="function">
    <text evidence="1">Involved in the catabolism of L-rhamnose (6-deoxy-L-mannose). Catalyzes the transfer of the gamma-phosphate group from ATP to the 1-hydroxyl group of L-rhamnulose to yield L-rhamnulose 1-phosphate.</text>
</comment>
<comment type="catalytic activity">
    <reaction evidence="1">
        <text>L-rhamnulose + ATP = L-rhamnulose 1-phosphate + ADP + H(+)</text>
        <dbReference type="Rhea" id="RHEA:20117"/>
        <dbReference type="ChEBI" id="CHEBI:15378"/>
        <dbReference type="ChEBI" id="CHEBI:17897"/>
        <dbReference type="ChEBI" id="CHEBI:30616"/>
        <dbReference type="ChEBI" id="CHEBI:58313"/>
        <dbReference type="ChEBI" id="CHEBI:456216"/>
        <dbReference type="EC" id="2.7.1.5"/>
    </reaction>
</comment>
<comment type="cofactor">
    <cofactor evidence="1">
        <name>Mg(2+)</name>
        <dbReference type="ChEBI" id="CHEBI:18420"/>
    </cofactor>
</comment>
<comment type="pathway">
    <text evidence="1">Carbohydrate degradation; L-rhamnose degradation; glycerone phosphate from L-rhamnose: step 2/3.</text>
</comment>
<comment type="similarity">
    <text evidence="1">Belongs to the rhamnulokinase family.</text>
</comment>
<comment type="sequence caution" evidence="2">
    <conflict type="erroneous initiation">
        <sequence resource="EMBL-CDS" id="ABP41992"/>
    </conflict>
    <text>Extended N-terminus.</text>
</comment>
<protein>
    <recommendedName>
        <fullName evidence="1">Rhamnulokinase</fullName>
        <shortName evidence="1">RhaB</shortName>
        <ecNumber evidence="1">2.7.1.5</ecNumber>
    </recommendedName>
    <alternativeName>
        <fullName evidence="1">ATP:L-rhamnulose phosphotransferase</fullName>
    </alternativeName>
    <alternativeName>
        <fullName evidence="1">L-rhamnulose 1-kinase</fullName>
    </alternativeName>
    <alternativeName>
        <fullName evidence="1">Rhamnulose kinase</fullName>
    </alternativeName>
</protein>
<name>RHAB_YERPP</name>
<reference key="1">
    <citation type="submission" date="2007-02" db="EMBL/GenBank/DDBJ databases">
        <title>Complete sequence of chromosome of Yersinia pestis Pestoides F.</title>
        <authorList>
            <consortium name="US DOE Joint Genome Institute"/>
            <person name="Copeland A."/>
            <person name="Lucas S."/>
            <person name="Lapidus A."/>
            <person name="Barry K."/>
            <person name="Detter J.C."/>
            <person name="Glavina del Rio T."/>
            <person name="Hammon N."/>
            <person name="Israni S."/>
            <person name="Dalin E."/>
            <person name="Tice H."/>
            <person name="Pitluck S."/>
            <person name="Di Bartolo G."/>
            <person name="Chain P."/>
            <person name="Malfatti S."/>
            <person name="Shin M."/>
            <person name="Vergez L."/>
            <person name="Schmutz J."/>
            <person name="Larimer F."/>
            <person name="Land M."/>
            <person name="Hauser L."/>
            <person name="Worsham P."/>
            <person name="Chu M."/>
            <person name="Bearden S."/>
            <person name="Garcia E."/>
            <person name="Richardson P."/>
        </authorList>
    </citation>
    <scope>NUCLEOTIDE SEQUENCE [LARGE SCALE GENOMIC DNA]</scope>
    <source>
        <strain>Pestoides F</strain>
    </source>
</reference>